<keyword id="KW-0072">Autophagy</keyword>
<keyword id="KW-0175">Coiled coil</keyword>
<keyword id="KW-0472">Membrane</keyword>
<keyword id="KW-0653">Protein transport</keyword>
<keyword id="KW-0813">Transport</keyword>
<gene>
    <name type="primary">ATG16</name>
    <name type="synonym">APG15</name>
    <name type="synonym">APG16</name>
    <name type="synonym">CVT11</name>
    <name type="synonym">SAP18</name>
    <name type="ORF">SCY_4334</name>
</gene>
<protein>
    <recommendedName>
        <fullName>Autophagy-related protein 16</fullName>
    </recommendedName>
    <alternativeName>
        <fullName>Cytoplasm to vacuole targeting protein 11</fullName>
    </alternativeName>
    <alternativeName>
        <fullName>SAP18 homolog</fullName>
    </alternativeName>
</protein>
<proteinExistence type="inferred from homology"/>
<reference key="1">
    <citation type="journal article" date="2007" name="Proc. Natl. Acad. Sci. U.S.A.">
        <title>Genome sequencing and comparative analysis of Saccharomyces cerevisiae strain YJM789.</title>
        <authorList>
            <person name="Wei W."/>
            <person name="McCusker J.H."/>
            <person name="Hyman R.W."/>
            <person name="Jones T."/>
            <person name="Ning Y."/>
            <person name="Cao Z."/>
            <person name="Gu Z."/>
            <person name="Bruno D."/>
            <person name="Miranda M."/>
            <person name="Nguyen M."/>
            <person name="Wilhelmy J."/>
            <person name="Komp C."/>
            <person name="Tamse R."/>
            <person name="Wang X."/>
            <person name="Jia P."/>
            <person name="Luedi P."/>
            <person name="Oefner P.J."/>
            <person name="David L."/>
            <person name="Dietrich F.S."/>
            <person name="Li Y."/>
            <person name="Davis R.W."/>
            <person name="Steinmetz L.M."/>
        </authorList>
    </citation>
    <scope>NUCLEOTIDE SEQUENCE [LARGE SCALE GENOMIC DNA]</scope>
    <source>
        <strain>YJM789</strain>
    </source>
</reference>
<sequence length="150" mass="17222">MGNFIITERKKAKEERSNPQTDSMDDLLIRRLTDRNDKEAHLNELFQDNSGAIGGNIVSHDDALLNTLAILQKELKSKEQEIRRLKEVIALKNKNTERLNDELISGTIENNVLQQKLSDLKKEHSQLVARWLKKTEKETEAMNSEIDGTK</sequence>
<evidence type="ECO:0000250" key="1"/>
<evidence type="ECO:0000250" key="2">
    <source>
        <dbReference type="UniProtKB" id="Q03818"/>
    </source>
</evidence>
<evidence type="ECO:0000255" key="3"/>
<evidence type="ECO:0000256" key="4">
    <source>
        <dbReference type="SAM" id="MobiDB-lite"/>
    </source>
</evidence>
<evidence type="ECO:0000305" key="5"/>
<comment type="function">
    <text evidence="1">Stabilizes the ATG5-ATG12 conjugate and mediates the formation of the 350 kDa complex, which is necessary for autophagy. The ATG5-ATG12/ATG16 complex is required for efficient promotion of ATG8-conjugation to phosphatidylethanolamine and ATG8 localization to the pre-autophagosomal structure (PAS). Also recruits ATG3 to the PAS. Involved in endoplasmic reticulum-specific autophagic process and is essential for the survival of cells subjected to severe ER stress (By similarity).</text>
</comment>
<comment type="subunit">
    <text evidence="1">Homodimer. Part of the 350 kDa complex which is at least composed of ATG5, ATG12 and ATG16. Several units of each may be present in this complex. Interacts directly with ATG12.</text>
</comment>
<comment type="subcellular location">
    <subcellularLocation>
        <location evidence="2">Preautophagosomal structure membrane</location>
        <topology evidence="2">Peripheral membrane protein</topology>
    </subcellularLocation>
</comment>
<comment type="similarity">
    <text evidence="5">Belongs to the ATG16 family.</text>
</comment>
<feature type="chain" id="PRO_0000317978" description="Autophagy-related protein 16">
    <location>
        <begin position="1"/>
        <end position="150"/>
    </location>
</feature>
<feature type="region of interest" description="Disordered" evidence="4">
    <location>
        <begin position="1"/>
        <end position="23"/>
    </location>
</feature>
<feature type="coiled-coil region" evidence="3">
    <location>
        <begin position="61"/>
        <end position="130"/>
    </location>
</feature>
<feature type="compositionally biased region" description="Basic and acidic residues" evidence="4">
    <location>
        <begin position="7"/>
        <end position="17"/>
    </location>
</feature>
<name>ATG16_YEAS7</name>
<organism>
    <name type="scientific">Saccharomyces cerevisiae (strain YJM789)</name>
    <name type="common">Baker's yeast</name>
    <dbReference type="NCBI Taxonomy" id="307796"/>
    <lineage>
        <taxon>Eukaryota</taxon>
        <taxon>Fungi</taxon>
        <taxon>Dikarya</taxon>
        <taxon>Ascomycota</taxon>
        <taxon>Saccharomycotina</taxon>
        <taxon>Saccharomycetes</taxon>
        <taxon>Saccharomycetales</taxon>
        <taxon>Saccharomycetaceae</taxon>
        <taxon>Saccharomyces</taxon>
    </lineage>
</organism>
<dbReference type="EMBL" id="AAFW02000021">
    <property type="protein sequence ID" value="EDN64092.1"/>
    <property type="molecule type" value="Genomic_DNA"/>
</dbReference>
<dbReference type="SMR" id="A6ZML8"/>
<dbReference type="HOGENOM" id="CLU_158825_0_0_1"/>
<dbReference type="Proteomes" id="UP000007060">
    <property type="component" value="Unassembled WGS sequence"/>
</dbReference>
<dbReference type="GO" id="GO:0034045">
    <property type="term" value="C:phagophore assembly site membrane"/>
    <property type="evidence" value="ECO:0007669"/>
    <property type="project" value="UniProtKB-SubCell"/>
</dbReference>
<dbReference type="GO" id="GO:0006914">
    <property type="term" value="P:autophagy"/>
    <property type="evidence" value="ECO:0007669"/>
    <property type="project" value="UniProtKB-KW"/>
</dbReference>
<dbReference type="GO" id="GO:0015031">
    <property type="term" value="P:protein transport"/>
    <property type="evidence" value="ECO:0007669"/>
    <property type="project" value="UniProtKB-KW"/>
</dbReference>
<dbReference type="CDD" id="cd22887">
    <property type="entry name" value="Atg16_CCD"/>
    <property type="match status" value="1"/>
</dbReference>
<dbReference type="CDD" id="cd22882">
    <property type="entry name" value="Atg16_NTD"/>
    <property type="match status" value="1"/>
</dbReference>
<dbReference type="Gene3D" id="1.20.5.170">
    <property type="match status" value="1"/>
</dbReference>
<dbReference type="InterPro" id="IPR013923">
    <property type="entry name" value="Autophagy-rel_prot_16_dom"/>
</dbReference>
<dbReference type="Pfam" id="PF08614">
    <property type="entry name" value="ATG16"/>
    <property type="match status" value="1"/>
</dbReference>
<accession>A6ZML8</accession>